<reference key="1">
    <citation type="journal article" date="1995" name="Eur. J. Biochem.">
        <title>Dimeric 3-phosphoglycerate kinases from hyperthermophilic Archaea. Cloning, sequencing and expression of the 3-phosphoglycerate kinase gene of Pyrococcus woesei in Escherichia coli and characterization of the protein. Structural and functional comparison with the 3-phosphoglycerate kinase of Methanothermus fervidus.</title>
        <authorList>
            <person name="Hess D."/>
            <person name="Krueger K."/>
            <person name="Knappik A."/>
            <person name="Palm P."/>
            <person name="Hensel R."/>
        </authorList>
    </citation>
    <scope>NUCLEOTIDE SEQUENCE [GENOMIC DNA]</scope>
    <scope>CHARACTERIZATION</scope>
    <source>
        <strain>ATCC 49860 / DSM 3773 / JCM 8421 / Vul4</strain>
    </source>
</reference>
<comment type="catalytic activity">
    <reaction>
        <text>(2R)-3-phosphoglycerate + ATP = (2R)-3-phospho-glyceroyl phosphate + ADP</text>
        <dbReference type="Rhea" id="RHEA:14801"/>
        <dbReference type="ChEBI" id="CHEBI:30616"/>
        <dbReference type="ChEBI" id="CHEBI:57604"/>
        <dbReference type="ChEBI" id="CHEBI:58272"/>
        <dbReference type="ChEBI" id="CHEBI:456216"/>
        <dbReference type="EC" id="2.7.2.3"/>
    </reaction>
</comment>
<comment type="pathway">
    <text>Carbohydrate degradation; glycolysis; pyruvate from D-glyceraldehyde 3-phosphate: step 2/5.</text>
</comment>
<comment type="subunit">
    <text>Homodimer.</text>
</comment>
<comment type="subcellular location">
    <subcellularLocation>
        <location>Cytoplasm</location>
    </subcellularLocation>
</comment>
<comment type="similarity">
    <text evidence="2">Belongs to the phosphoglycerate kinase family.</text>
</comment>
<gene>
    <name type="primary">pgk</name>
</gene>
<dbReference type="EC" id="2.7.2.3"/>
<dbReference type="EMBL" id="X73527">
    <property type="protein sequence ID" value="CAA51930.1"/>
    <property type="molecule type" value="Genomic_DNA"/>
</dbReference>
<dbReference type="PIR" id="S68188">
    <property type="entry name" value="S68188"/>
</dbReference>
<dbReference type="SMR" id="P61884"/>
<dbReference type="BRENDA" id="2.7.2.3">
    <property type="organism ID" value="5249"/>
</dbReference>
<dbReference type="SABIO-RK" id="P61884"/>
<dbReference type="UniPathway" id="UPA00109">
    <property type="reaction ID" value="UER00185"/>
</dbReference>
<dbReference type="GO" id="GO:0005829">
    <property type="term" value="C:cytosol"/>
    <property type="evidence" value="ECO:0007669"/>
    <property type="project" value="TreeGrafter"/>
</dbReference>
<dbReference type="GO" id="GO:0043531">
    <property type="term" value="F:ADP binding"/>
    <property type="evidence" value="ECO:0007669"/>
    <property type="project" value="TreeGrafter"/>
</dbReference>
<dbReference type="GO" id="GO:0005524">
    <property type="term" value="F:ATP binding"/>
    <property type="evidence" value="ECO:0007669"/>
    <property type="project" value="UniProtKB-KW"/>
</dbReference>
<dbReference type="GO" id="GO:0004618">
    <property type="term" value="F:phosphoglycerate kinase activity"/>
    <property type="evidence" value="ECO:0007669"/>
    <property type="project" value="UniProtKB-UniRule"/>
</dbReference>
<dbReference type="GO" id="GO:0006094">
    <property type="term" value="P:gluconeogenesis"/>
    <property type="evidence" value="ECO:0007669"/>
    <property type="project" value="TreeGrafter"/>
</dbReference>
<dbReference type="GO" id="GO:0006096">
    <property type="term" value="P:glycolytic process"/>
    <property type="evidence" value="ECO:0007669"/>
    <property type="project" value="UniProtKB-UniRule"/>
</dbReference>
<dbReference type="FunFam" id="3.40.50.1260:FF:000006">
    <property type="entry name" value="Phosphoglycerate kinase"/>
    <property type="match status" value="1"/>
</dbReference>
<dbReference type="FunFam" id="3.40.50.1260:FF:000012">
    <property type="entry name" value="Phosphoglycerate kinase"/>
    <property type="match status" value="1"/>
</dbReference>
<dbReference type="Gene3D" id="3.40.50.1260">
    <property type="entry name" value="Phosphoglycerate kinase, N-terminal domain"/>
    <property type="match status" value="2"/>
</dbReference>
<dbReference type="HAMAP" id="MF_00145">
    <property type="entry name" value="Phosphoglyc_kinase"/>
    <property type="match status" value="1"/>
</dbReference>
<dbReference type="InterPro" id="IPR001576">
    <property type="entry name" value="Phosphoglycerate_kinase"/>
</dbReference>
<dbReference type="InterPro" id="IPR015911">
    <property type="entry name" value="Phosphoglycerate_kinase_CS"/>
</dbReference>
<dbReference type="InterPro" id="IPR015824">
    <property type="entry name" value="Phosphoglycerate_kinase_N"/>
</dbReference>
<dbReference type="InterPro" id="IPR036043">
    <property type="entry name" value="Phosphoglycerate_kinase_sf"/>
</dbReference>
<dbReference type="PANTHER" id="PTHR11406">
    <property type="entry name" value="PHOSPHOGLYCERATE KINASE"/>
    <property type="match status" value="1"/>
</dbReference>
<dbReference type="PANTHER" id="PTHR11406:SF23">
    <property type="entry name" value="PHOSPHOGLYCERATE KINASE 1, CHLOROPLASTIC-RELATED"/>
    <property type="match status" value="1"/>
</dbReference>
<dbReference type="Pfam" id="PF00162">
    <property type="entry name" value="PGK"/>
    <property type="match status" value="1"/>
</dbReference>
<dbReference type="PIRSF" id="PIRSF000724">
    <property type="entry name" value="Pgk"/>
    <property type="match status" value="1"/>
</dbReference>
<dbReference type="PRINTS" id="PR00477">
    <property type="entry name" value="PHGLYCKINASE"/>
</dbReference>
<dbReference type="SUPFAM" id="SSF53748">
    <property type="entry name" value="Phosphoglycerate kinase"/>
    <property type="match status" value="1"/>
</dbReference>
<dbReference type="PROSITE" id="PS00111">
    <property type="entry name" value="PGLYCERATE_KINASE"/>
    <property type="match status" value="1"/>
</dbReference>
<sequence length="410" mass="46224">MFRLRDFEYYNRTVFLRVDLNSPMSNGKIISDARFRAVLPTIKYLIESGAKVVVGTHQGKPYSEEYSTTEEHARILSELLNMHVEYVEDIFGKYARERIKAMKPGEVIVLENLRFSAEEVKNATIEECEKTFFVRKLSQVIDLVVNDAFAAAHRSQPSLVGFARIKPMIMGFLMEKEVDALTKAYESEEKPRVYVLGGAKVDDSLKVAENVLRKEKADLILTGGLVGQLFTLAKGFDLGRENIKFLEKKGILKYVDWAEKILDEFYPYVRTPVDFAIDFKGERVEIDLLSDEKRLFDEYPILDIGSRTVEKYREILLKARIIVANGPMGVFEREEFAVGTIGVFKAIGESPAFSVIGGGHSIASIYKYNITGISHISTGGGAMLTFFAGEKLPVLEALKISYEKFSNLLS</sequence>
<feature type="chain" id="PRO_0000146069" description="Phosphoglycerate kinase">
    <location>
        <begin position="1"/>
        <end position="410"/>
    </location>
</feature>
<feature type="binding site" evidence="1">
    <location>
        <begin position="19"/>
        <end position="21"/>
    </location>
    <ligand>
        <name>substrate</name>
    </ligand>
</feature>
<feature type="binding site" evidence="1">
    <location>
        <position position="34"/>
    </location>
    <ligand>
        <name>substrate</name>
    </ligand>
</feature>
<feature type="binding site" evidence="1">
    <location>
        <begin position="57"/>
        <end position="60"/>
    </location>
    <ligand>
        <name>substrate</name>
    </ligand>
</feature>
<feature type="binding site" evidence="1">
    <location>
        <position position="114"/>
    </location>
    <ligand>
        <name>substrate</name>
    </ligand>
</feature>
<feature type="binding site" evidence="1">
    <location>
        <position position="154"/>
    </location>
    <ligand>
        <name>substrate</name>
    </ligand>
</feature>
<feature type="binding site" evidence="1">
    <location>
        <position position="332"/>
    </location>
    <ligand>
        <name>ATP</name>
        <dbReference type="ChEBI" id="CHEBI:30616"/>
    </ligand>
</feature>
<feature type="binding site" evidence="1">
    <location>
        <begin position="358"/>
        <end position="361"/>
    </location>
    <ligand>
        <name>ATP</name>
        <dbReference type="ChEBI" id="CHEBI:30616"/>
    </ligand>
</feature>
<protein>
    <recommendedName>
        <fullName>Phosphoglycerate kinase</fullName>
        <ecNumber>2.7.2.3</ecNumber>
    </recommendedName>
</protein>
<keyword id="KW-0067">ATP-binding</keyword>
<keyword id="KW-0963">Cytoplasm</keyword>
<keyword id="KW-0324">Glycolysis</keyword>
<keyword id="KW-0418">Kinase</keyword>
<keyword id="KW-0547">Nucleotide-binding</keyword>
<keyword id="KW-0808">Transferase</keyword>
<organism>
    <name type="scientific">Pyrococcus woesei</name>
    <dbReference type="NCBI Taxonomy" id="2262"/>
    <lineage>
        <taxon>Archaea</taxon>
        <taxon>Methanobacteriati</taxon>
        <taxon>Methanobacteriota</taxon>
        <taxon>Thermococci</taxon>
        <taxon>Thermococcales</taxon>
        <taxon>Thermococcaceae</taxon>
        <taxon>Pyrococcus</taxon>
    </lineage>
</organism>
<accession>P61884</accession>
<accession>P50316</accession>
<name>PGK_PYRWO</name>
<proteinExistence type="evidence at protein level"/>
<evidence type="ECO:0000250" key="1"/>
<evidence type="ECO:0000305" key="2"/>